<accession>A6GVK0</accession>
<gene>
    <name evidence="1" type="primary">mnmG</name>
    <name evidence="1" type="synonym">gidA</name>
    <name type="ordered locus">FP0003</name>
</gene>
<proteinExistence type="inferred from homology"/>
<keyword id="KW-0963">Cytoplasm</keyword>
<keyword id="KW-0274">FAD</keyword>
<keyword id="KW-0285">Flavoprotein</keyword>
<keyword id="KW-0520">NAD</keyword>
<keyword id="KW-1185">Reference proteome</keyword>
<keyword id="KW-0819">tRNA processing</keyword>
<dbReference type="EMBL" id="AM398681">
    <property type="protein sequence ID" value="CAL42122.1"/>
    <property type="molecule type" value="Genomic_DNA"/>
</dbReference>
<dbReference type="RefSeq" id="WP_011962184.1">
    <property type="nucleotide sequence ID" value="NC_009613.3"/>
</dbReference>
<dbReference type="RefSeq" id="YP_001294943.1">
    <property type="nucleotide sequence ID" value="NC_009613.3"/>
</dbReference>
<dbReference type="SMR" id="A6GVK0"/>
<dbReference type="STRING" id="402612.FP0003"/>
<dbReference type="EnsemblBacteria" id="CAL42122">
    <property type="protein sequence ID" value="CAL42122"/>
    <property type="gene ID" value="FP0003"/>
</dbReference>
<dbReference type="GeneID" id="66553614"/>
<dbReference type="KEGG" id="fps:FP0003"/>
<dbReference type="PATRIC" id="fig|402612.5.peg.3"/>
<dbReference type="eggNOG" id="COG0445">
    <property type="taxonomic scope" value="Bacteria"/>
</dbReference>
<dbReference type="HOGENOM" id="CLU_007831_2_2_10"/>
<dbReference type="OrthoDB" id="9815560at2"/>
<dbReference type="Proteomes" id="UP000006394">
    <property type="component" value="Chromosome"/>
</dbReference>
<dbReference type="GO" id="GO:0005829">
    <property type="term" value="C:cytosol"/>
    <property type="evidence" value="ECO:0007669"/>
    <property type="project" value="TreeGrafter"/>
</dbReference>
<dbReference type="GO" id="GO:0050660">
    <property type="term" value="F:flavin adenine dinucleotide binding"/>
    <property type="evidence" value="ECO:0007669"/>
    <property type="project" value="UniProtKB-UniRule"/>
</dbReference>
<dbReference type="GO" id="GO:0030488">
    <property type="term" value="P:tRNA methylation"/>
    <property type="evidence" value="ECO:0007669"/>
    <property type="project" value="TreeGrafter"/>
</dbReference>
<dbReference type="GO" id="GO:0002098">
    <property type="term" value="P:tRNA wobble uridine modification"/>
    <property type="evidence" value="ECO:0007669"/>
    <property type="project" value="InterPro"/>
</dbReference>
<dbReference type="FunFam" id="1.10.150.570:FF:000001">
    <property type="entry name" value="tRNA uridine 5-carboxymethylaminomethyl modification enzyme MnmG"/>
    <property type="match status" value="1"/>
</dbReference>
<dbReference type="FunFam" id="3.50.50.60:FF:000002">
    <property type="entry name" value="tRNA uridine 5-carboxymethylaminomethyl modification enzyme MnmG"/>
    <property type="match status" value="1"/>
</dbReference>
<dbReference type="Gene3D" id="3.50.50.60">
    <property type="entry name" value="FAD/NAD(P)-binding domain"/>
    <property type="match status" value="2"/>
</dbReference>
<dbReference type="Gene3D" id="1.10.150.570">
    <property type="entry name" value="GidA associated domain, C-terminal subdomain"/>
    <property type="match status" value="1"/>
</dbReference>
<dbReference type="Gene3D" id="1.10.10.1800">
    <property type="entry name" value="tRNA uridine 5-carboxymethylaminomethyl modification enzyme MnmG/GidA"/>
    <property type="match status" value="1"/>
</dbReference>
<dbReference type="HAMAP" id="MF_00129">
    <property type="entry name" value="MnmG_GidA"/>
    <property type="match status" value="1"/>
</dbReference>
<dbReference type="InterPro" id="IPR036188">
    <property type="entry name" value="FAD/NAD-bd_sf"/>
</dbReference>
<dbReference type="InterPro" id="IPR049312">
    <property type="entry name" value="GIDA_C_N"/>
</dbReference>
<dbReference type="InterPro" id="IPR004416">
    <property type="entry name" value="MnmG"/>
</dbReference>
<dbReference type="InterPro" id="IPR002218">
    <property type="entry name" value="MnmG-rel"/>
</dbReference>
<dbReference type="InterPro" id="IPR020595">
    <property type="entry name" value="MnmG-rel_CS"/>
</dbReference>
<dbReference type="InterPro" id="IPR026904">
    <property type="entry name" value="MnmG_C"/>
</dbReference>
<dbReference type="InterPro" id="IPR047001">
    <property type="entry name" value="MnmG_C_subdom"/>
</dbReference>
<dbReference type="InterPro" id="IPR044920">
    <property type="entry name" value="MnmG_C_subdom_sf"/>
</dbReference>
<dbReference type="InterPro" id="IPR040131">
    <property type="entry name" value="MnmG_N"/>
</dbReference>
<dbReference type="NCBIfam" id="TIGR00136">
    <property type="entry name" value="mnmG_gidA"/>
    <property type="match status" value="1"/>
</dbReference>
<dbReference type="PANTHER" id="PTHR11806">
    <property type="entry name" value="GLUCOSE INHIBITED DIVISION PROTEIN A"/>
    <property type="match status" value="1"/>
</dbReference>
<dbReference type="PANTHER" id="PTHR11806:SF0">
    <property type="entry name" value="PROTEIN MTO1 HOMOLOG, MITOCHONDRIAL"/>
    <property type="match status" value="1"/>
</dbReference>
<dbReference type="Pfam" id="PF01134">
    <property type="entry name" value="GIDA"/>
    <property type="match status" value="1"/>
</dbReference>
<dbReference type="Pfam" id="PF21680">
    <property type="entry name" value="GIDA_C_1st"/>
    <property type="match status" value="1"/>
</dbReference>
<dbReference type="Pfam" id="PF13932">
    <property type="entry name" value="SAM_GIDA_C"/>
    <property type="match status" value="1"/>
</dbReference>
<dbReference type="SMART" id="SM01228">
    <property type="entry name" value="GIDA_assoc_3"/>
    <property type="match status" value="1"/>
</dbReference>
<dbReference type="SUPFAM" id="SSF51905">
    <property type="entry name" value="FAD/NAD(P)-binding domain"/>
    <property type="match status" value="1"/>
</dbReference>
<dbReference type="PROSITE" id="PS01280">
    <property type="entry name" value="GIDA_1"/>
    <property type="match status" value="1"/>
</dbReference>
<dbReference type="PROSITE" id="PS01281">
    <property type="entry name" value="GIDA_2"/>
    <property type="match status" value="1"/>
</dbReference>
<evidence type="ECO:0000255" key="1">
    <source>
        <dbReference type="HAMAP-Rule" id="MF_00129"/>
    </source>
</evidence>
<protein>
    <recommendedName>
        <fullName evidence="1">tRNA uridine 5-carboxymethylaminomethyl modification enzyme MnmG</fullName>
    </recommendedName>
    <alternativeName>
        <fullName evidence="1">Glucose-inhibited division protein A</fullName>
    </alternativeName>
</protein>
<reference key="1">
    <citation type="journal article" date="2007" name="Nat. Biotechnol.">
        <title>Complete genome sequence of the fish pathogen Flavobacterium psychrophilum.</title>
        <authorList>
            <person name="Duchaud E."/>
            <person name="Boussaha M."/>
            <person name="Loux V."/>
            <person name="Bernardet J.-F."/>
            <person name="Michel C."/>
            <person name="Kerouault B."/>
            <person name="Mondot S."/>
            <person name="Nicolas P."/>
            <person name="Bossy R."/>
            <person name="Caron C."/>
            <person name="Bessieres P."/>
            <person name="Gibrat J.-F."/>
            <person name="Claverol S."/>
            <person name="Dumetz F."/>
            <person name="Le Henaff M."/>
            <person name="Benmansour A."/>
        </authorList>
    </citation>
    <scope>NUCLEOTIDE SEQUENCE [LARGE SCALE GENOMIC DNA]</scope>
    <source>
        <strain>ATCC 49511 / DSM 21280 / CIP 103535 / JIP02/86</strain>
    </source>
</reference>
<sequence length="623" mass="69377">MFLEEYDVIVVGAGHAGCEAAAASANLGCSTLLVTMSLQNIAQMSCNPAMGGIAKGQIVREIDALGGYSGIVSDNTAIQFKMLNKSKGPAMWSPRVQSDRMRFAEEWRLMLEGTPNLDFYQEMVSGMVIENNKVLGIKTSLGLTIRGKSVVLTNGTFLNGLIHIGDKQFGGGRAGESAAYGITEDLVKAGFESGRMKTGTPPRVDGRSLDYSKMNVEAGDINPSKFSYSDVTKPLVHQRDCHMTYTSLLVHDILREGFERSPMFNGRIKSLGPRYCPSIEDKINRFADKDRHQLFVEPEGWNTCEVYVNGFSTSLPEDIQFKALRSVVGFEKVKFFRAGYAIEYDYFPPTQLKHTLETKLISGLYFAGQINGTTGYEEAASQGLMAGINAALKVKEKEPLILKRDEAYIGVLIDDLITKGTEEPYRMFTSRAEFRTLLRQDNADFRLTPMSNTLGLASDARLRRMEHKLNESEKMVAFFKETSITPTEANPVLIAKKTAEVNQTDKIFKILSRPQIDLSDVLKFENVANYVANNNVDQEILEQAEIQVKYSGYIDKERANAEKLTRLEDLKIPEKFDYHQIKSMSIEAKQKLSKIRPVTISQASRISGVSPSDISVLLVFLGR</sequence>
<organism>
    <name type="scientific">Flavobacterium psychrophilum (strain ATCC 49511 / DSM 21280 / CIP 103535 / JIP02/86)</name>
    <dbReference type="NCBI Taxonomy" id="402612"/>
    <lineage>
        <taxon>Bacteria</taxon>
        <taxon>Pseudomonadati</taxon>
        <taxon>Bacteroidota</taxon>
        <taxon>Flavobacteriia</taxon>
        <taxon>Flavobacteriales</taxon>
        <taxon>Flavobacteriaceae</taxon>
        <taxon>Flavobacterium</taxon>
    </lineage>
</organism>
<comment type="function">
    <text evidence="1">NAD-binding protein involved in the addition of a carboxymethylaminomethyl (cmnm) group at the wobble position (U34) of certain tRNAs, forming tRNA-cmnm(5)s(2)U34.</text>
</comment>
<comment type="cofactor">
    <cofactor evidence="1">
        <name>FAD</name>
        <dbReference type="ChEBI" id="CHEBI:57692"/>
    </cofactor>
</comment>
<comment type="subunit">
    <text evidence="1">Homodimer. Heterotetramer of two MnmE and two MnmG subunits.</text>
</comment>
<comment type="subcellular location">
    <subcellularLocation>
        <location evidence="1">Cytoplasm</location>
    </subcellularLocation>
</comment>
<comment type="similarity">
    <text evidence="1">Belongs to the MnmG family.</text>
</comment>
<name>MNMG_FLAPJ</name>
<feature type="chain" id="PRO_0000345273" description="tRNA uridine 5-carboxymethylaminomethyl modification enzyme MnmG">
    <location>
        <begin position="1"/>
        <end position="623"/>
    </location>
</feature>
<feature type="binding site" evidence="1">
    <location>
        <begin position="12"/>
        <end position="17"/>
    </location>
    <ligand>
        <name>FAD</name>
        <dbReference type="ChEBI" id="CHEBI:57692"/>
    </ligand>
</feature>
<feature type="binding site" evidence="1">
    <location>
        <begin position="272"/>
        <end position="286"/>
    </location>
    <ligand>
        <name>NAD(+)</name>
        <dbReference type="ChEBI" id="CHEBI:57540"/>
    </ligand>
</feature>